<reference key="1">
    <citation type="journal article" date="2002" name="Proc. Natl. Acad. Sci. U.S.A.">
        <title>Genome sequence and comparative microarray analysis of serotype M18 group A Streptococcus strains associated with acute rheumatic fever outbreaks.</title>
        <authorList>
            <person name="Smoot J.C."/>
            <person name="Barbian K.D."/>
            <person name="Van Gompel J.J."/>
            <person name="Smoot L.M."/>
            <person name="Chaussee M.S."/>
            <person name="Sylva G.L."/>
            <person name="Sturdevant D.E."/>
            <person name="Ricklefs S.M."/>
            <person name="Porcella S.F."/>
            <person name="Parkins L.D."/>
            <person name="Beres S.B."/>
            <person name="Campbell D.S."/>
            <person name="Smith T.M."/>
            <person name="Zhang Q."/>
            <person name="Kapur V."/>
            <person name="Daly J.A."/>
            <person name="Veasy L.G."/>
            <person name="Musser J.M."/>
        </authorList>
    </citation>
    <scope>NUCLEOTIDE SEQUENCE [LARGE SCALE GENOMIC DNA]</scope>
    <source>
        <strain>MGAS8232</strain>
    </source>
</reference>
<sequence>MTATKQHKKVILVGDGAVGSSYAFALVTQNIAQELGIIDIFKEKTQGDAEDLSHALAFTSPKKIYAADYSDCHDADLVVLTAGAPQKPGETRLDLVEKNLRINKEVVTQIVASGFKGIFLVAANPVDVLTYSTWKFSGFPKERVIGSGTSLDSARFRQALAAKIGVDARSVHAYIMGEHGDSEFAVWSHANVAGVGLYDWLQANRDIDEQGLVDLFISVRDAAYSIINKKGATFYGIAVALARITKAILDDENAVLPLSVFQEGQYEGVEDCYIGQPAIVGAYGIVRPVNIPLNDAELQKMQASANQLKAIIDEAFAKEEFASAAKN</sequence>
<comment type="function">
    <text evidence="2">Catalyzes the conversion of lactate to pyruvate.</text>
</comment>
<comment type="catalytic activity">
    <reaction evidence="2">
        <text>(S)-lactate + NAD(+) = pyruvate + NADH + H(+)</text>
        <dbReference type="Rhea" id="RHEA:23444"/>
        <dbReference type="ChEBI" id="CHEBI:15361"/>
        <dbReference type="ChEBI" id="CHEBI:15378"/>
        <dbReference type="ChEBI" id="CHEBI:16651"/>
        <dbReference type="ChEBI" id="CHEBI:57540"/>
        <dbReference type="ChEBI" id="CHEBI:57945"/>
        <dbReference type="EC" id="1.1.1.27"/>
    </reaction>
</comment>
<comment type="activity regulation">
    <text evidence="2">Allosterically activated by fructose 1,6-bisphosphate (FBP).</text>
</comment>
<comment type="pathway">
    <text evidence="2">Fermentation; pyruvate fermentation to lactate; (S)-lactate from pyruvate: step 1/1.</text>
</comment>
<comment type="subunit">
    <text evidence="2">Homotetramer.</text>
</comment>
<comment type="subcellular location">
    <subcellularLocation>
        <location evidence="2">Cytoplasm</location>
    </subcellularLocation>
</comment>
<comment type="similarity">
    <text evidence="2 3">Belongs to the LDH/MDH superfamily. LDH family.</text>
</comment>
<name>LDH_STRP8</name>
<gene>
    <name evidence="2" type="primary">ldh</name>
    <name type="ordered locus">spyM18_1111</name>
</gene>
<protein>
    <recommendedName>
        <fullName evidence="2">L-lactate dehydrogenase</fullName>
        <shortName evidence="2">L-LDH</shortName>
        <ecNumber evidence="2">1.1.1.27</ecNumber>
    </recommendedName>
</protein>
<evidence type="ECO:0000250" key="1"/>
<evidence type="ECO:0000255" key="2">
    <source>
        <dbReference type="HAMAP-Rule" id="MF_00488"/>
    </source>
</evidence>
<evidence type="ECO:0000305" key="3"/>
<feature type="initiator methionine" description="Removed" evidence="1">
    <location>
        <position position="1"/>
    </location>
</feature>
<feature type="chain" id="PRO_0000168402" description="L-lactate dehydrogenase">
    <location>
        <begin position="2"/>
        <end position="327"/>
    </location>
</feature>
<feature type="active site" description="Proton acceptor" evidence="2">
    <location>
        <position position="179"/>
    </location>
</feature>
<feature type="binding site" evidence="2">
    <location>
        <position position="18"/>
    </location>
    <ligand>
        <name>NAD(+)</name>
        <dbReference type="ChEBI" id="CHEBI:57540"/>
    </ligand>
</feature>
<feature type="binding site" evidence="2">
    <location>
        <position position="39"/>
    </location>
    <ligand>
        <name>NAD(+)</name>
        <dbReference type="ChEBI" id="CHEBI:57540"/>
    </ligand>
</feature>
<feature type="binding site" evidence="2">
    <location>
        <position position="44"/>
    </location>
    <ligand>
        <name>NAD(+)</name>
        <dbReference type="ChEBI" id="CHEBI:57540"/>
    </ligand>
</feature>
<feature type="binding site" evidence="2">
    <location>
        <position position="69"/>
    </location>
    <ligand>
        <name>NAD(+)</name>
        <dbReference type="ChEBI" id="CHEBI:57540"/>
    </ligand>
</feature>
<feature type="binding site" evidence="2">
    <location>
        <begin position="83"/>
        <end position="84"/>
    </location>
    <ligand>
        <name>NAD(+)</name>
        <dbReference type="ChEBI" id="CHEBI:57540"/>
    </ligand>
</feature>
<feature type="binding site" evidence="2">
    <location>
        <position position="86"/>
    </location>
    <ligand>
        <name>substrate</name>
    </ligand>
</feature>
<feature type="binding site" evidence="2">
    <location>
        <position position="92"/>
    </location>
    <ligand>
        <name>substrate</name>
    </ligand>
</feature>
<feature type="binding site" evidence="2">
    <location>
        <begin position="122"/>
        <end position="124"/>
    </location>
    <ligand>
        <name>NAD(+)</name>
        <dbReference type="ChEBI" id="CHEBI:57540"/>
    </ligand>
</feature>
<feature type="binding site" evidence="2">
    <location>
        <begin position="124"/>
        <end position="127"/>
    </location>
    <ligand>
        <name>substrate</name>
    </ligand>
</feature>
<feature type="binding site" evidence="2">
    <location>
        <position position="147"/>
    </location>
    <ligand>
        <name>NAD(+)</name>
        <dbReference type="ChEBI" id="CHEBI:57540"/>
    </ligand>
</feature>
<feature type="binding site" evidence="2">
    <location>
        <begin position="152"/>
        <end position="155"/>
    </location>
    <ligand>
        <name>substrate</name>
    </ligand>
</feature>
<feature type="binding site" evidence="2">
    <location>
        <position position="157"/>
    </location>
    <ligand>
        <name>beta-D-fructose 1,6-bisphosphate</name>
        <dbReference type="ChEBI" id="CHEBI:32966"/>
        <note>allosteric activator</note>
    </ligand>
</feature>
<feature type="binding site" evidence="2">
    <location>
        <position position="172"/>
    </location>
    <ligand>
        <name>beta-D-fructose 1,6-bisphosphate</name>
        <dbReference type="ChEBI" id="CHEBI:32966"/>
        <note>allosteric activator</note>
    </ligand>
</feature>
<feature type="binding site" evidence="2">
    <location>
        <position position="233"/>
    </location>
    <ligand>
        <name>substrate</name>
    </ligand>
</feature>
<feature type="modified residue" description="Phosphotyrosine" evidence="2">
    <location>
        <position position="224"/>
    </location>
</feature>
<organism>
    <name type="scientific">Streptococcus pyogenes serotype M18 (strain MGAS8232)</name>
    <dbReference type="NCBI Taxonomy" id="186103"/>
    <lineage>
        <taxon>Bacteria</taxon>
        <taxon>Bacillati</taxon>
        <taxon>Bacillota</taxon>
        <taxon>Bacilli</taxon>
        <taxon>Lactobacillales</taxon>
        <taxon>Streptococcaceae</taxon>
        <taxon>Streptococcus</taxon>
    </lineage>
</organism>
<dbReference type="EC" id="1.1.1.27" evidence="2"/>
<dbReference type="EMBL" id="AE009949">
    <property type="protein sequence ID" value="AAL97733.1"/>
    <property type="molecule type" value="Genomic_DNA"/>
</dbReference>
<dbReference type="RefSeq" id="WP_002984645.1">
    <property type="nucleotide sequence ID" value="NC_003485.1"/>
</dbReference>
<dbReference type="SMR" id="P65261"/>
<dbReference type="KEGG" id="spm:spyM18_1111"/>
<dbReference type="HOGENOM" id="CLU_045401_1_1_9"/>
<dbReference type="UniPathway" id="UPA00554">
    <property type="reaction ID" value="UER00611"/>
</dbReference>
<dbReference type="GO" id="GO:0005737">
    <property type="term" value="C:cytoplasm"/>
    <property type="evidence" value="ECO:0007669"/>
    <property type="project" value="UniProtKB-SubCell"/>
</dbReference>
<dbReference type="GO" id="GO:0004459">
    <property type="term" value="F:L-lactate dehydrogenase activity"/>
    <property type="evidence" value="ECO:0007669"/>
    <property type="project" value="UniProtKB-UniRule"/>
</dbReference>
<dbReference type="GO" id="GO:0006096">
    <property type="term" value="P:glycolytic process"/>
    <property type="evidence" value="ECO:0007669"/>
    <property type="project" value="UniProtKB-UniRule"/>
</dbReference>
<dbReference type="GO" id="GO:0006089">
    <property type="term" value="P:lactate metabolic process"/>
    <property type="evidence" value="ECO:0007669"/>
    <property type="project" value="TreeGrafter"/>
</dbReference>
<dbReference type="CDD" id="cd05291">
    <property type="entry name" value="HicDH_like"/>
    <property type="match status" value="1"/>
</dbReference>
<dbReference type="FunFam" id="3.40.50.720:FF:000018">
    <property type="entry name" value="Malate dehydrogenase"/>
    <property type="match status" value="1"/>
</dbReference>
<dbReference type="Gene3D" id="3.90.110.10">
    <property type="entry name" value="Lactate dehydrogenase/glycoside hydrolase, family 4, C-terminal"/>
    <property type="match status" value="1"/>
</dbReference>
<dbReference type="Gene3D" id="3.40.50.720">
    <property type="entry name" value="NAD(P)-binding Rossmann-like Domain"/>
    <property type="match status" value="1"/>
</dbReference>
<dbReference type="HAMAP" id="MF_00488">
    <property type="entry name" value="Lactate_dehydrog"/>
    <property type="match status" value="1"/>
</dbReference>
<dbReference type="InterPro" id="IPR001557">
    <property type="entry name" value="L-lactate/malate_DH"/>
</dbReference>
<dbReference type="InterPro" id="IPR011304">
    <property type="entry name" value="L-lactate_DH"/>
</dbReference>
<dbReference type="InterPro" id="IPR018177">
    <property type="entry name" value="L-lactate_DH_AS"/>
</dbReference>
<dbReference type="InterPro" id="IPR022383">
    <property type="entry name" value="Lactate/malate_DH_C"/>
</dbReference>
<dbReference type="InterPro" id="IPR001236">
    <property type="entry name" value="Lactate/malate_DH_N"/>
</dbReference>
<dbReference type="InterPro" id="IPR015955">
    <property type="entry name" value="Lactate_DH/Glyco_Ohase_4_C"/>
</dbReference>
<dbReference type="InterPro" id="IPR036291">
    <property type="entry name" value="NAD(P)-bd_dom_sf"/>
</dbReference>
<dbReference type="NCBIfam" id="TIGR01771">
    <property type="entry name" value="L-LDH-NAD"/>
    <property type="match status" value="1"/>
</dbReference>
<dbReference type="NCBIfam" id="NF000824">
    <property type="entry name" value="PRK00066.1"/>
    <property type="match status" value="1"/>
</dbReference>
<dbReference type="PANTHER" id="PTHR43128">
    <property type="entry name" value="L-2-HYDROXYCARBOXYLATE DEHYDROGENASE (NAD(P)(+))"/>
    <property type="match status" value="1"/>
</dbReference>
<dbReference type="PANTHER" id="PTHR43128:SF16">
    <property type="entry name" value="L-LACTATE DEHYDROGENASE"/>
    <property type="match status" value="1"/>
</dbReference>
<dbReference type="Pfam" id="PF02866">
    <property type="entry name" value="Ldh_1_C"/>
    <property type="match status" value="1"/>
</dbReference>
<dbReference type="Pfam" id="PF00056">
    <property type="entry name" value="Ldh_1_N"/>
    <property type="match status" value="1"/>
</dbReference>
<dbReference type="PIRSF" id="PIRSF000102">
    <property type="entry name" value="Lac_mal_DH"/>
    <property type="match status" value="1"/>
</dbReference>
<dbReference type="PRINTS" id="PR00086">
    <property type="entry name" value="LLDHDRGNASE"/>
</dbReference>
<dbReference type="SUPFAM" id="SSF56327">
    <property type="entry name" value="LDH C-terminal domain-like"/>
    <property type="match status" value="1"/>
</dbReference>
<dbReference type="SUPFAM" id="SSF51735">
    <property type="entry name" value="NAD(P)-binding Rossmann-fold domains"/>
    <property type="match status" value="1"/>
</dbReference>
<dbReference type="PROSITE" id="PS00064">
    <property type="entry name" value="L_LDH"/>
    <property type="match status" value="1"/>
</dbReference>
<proteinExistence type="inferred from homology"/>
<accession>P65261</accession>
<accession>Q99ZN5</accession>
<keyword id="KW-0021">Allosteric enzyme</keyword>
<keyword id="KW-0963">Cytoplasm</keyword>
<keyword id="KW-0520">NAD</keyword>
<keyword id="KW-0560">Oxidoreductase</keyword>
<keyword id="KW-0597">Phosphoprotein</keyword>